<gene>
    <name type="ORF">C05D9.3</name>
</gene>
<evidence type="ECO:0000250" key="1"/>
<evidence type="ECO:0000255" key="2"/>
<evidence type="ECO:0000255" key="3">
    <source>
        <dbReference type="PROSITE-ProRule" id="PRU01392"/>
    </source>
</evidence>
<evidence type="ECO:0000256" key="4">
    <source>
        <dbReference type="SAM" id="MobiDB-lite"/>
    </source>
</evidence>
<evidence type="ECO:0000269" key="5">
    <source>
    </source>
</evidence>
<evidence type="ECO:0000269" key="6">
    <source>
    </source>
</evidence>
<evidence type="ECO:0000305" key="7"/>
<accession>Q9GYK2</accession>
<name>ITBL_CAEEL</name>
<keyword id="KW-1015">Disulfide bond</keyword>
<keyword id="KW-0245">EGF-like domain</keyword>
<keyword id="KW-0325">Glycoprotein</keyword>
<keyword id="KW-0401">Integrin</keyword>
<keyword id="KW-0472">Membrane</keyword>
<keyword id="KW-1185">Reference proteome</keyword>
<keyword id="KW-0677">Repeat</keyword>
<keyword id="KW-0732">Signal</keyword>
<keyword id="KW-0812">Transmembrane</keyword>
<keyword id="KW-1133">Transmembrane helix</keyword>
<sequence>MKSRIFFITLLTIVAAQESADQLCSSFDAQQSCGQCIKAHAECAWCIDPHSSLTNRCQLKSKFTNETCTPHLVYSPQTAQVKIQQNLPLETKQHDGKTIVRQQPQAVSVRLMPSHSATVSFKYLHQTDPSRRSTEPETMEIQTSDVKDTPLQLKFFIVCDGELKETKSCRVQNNQIVEFKIEVLVNSCSSTGDITLSVGILRQRTIAGLYVTTICGCECEKHPEINSRLCHQNGHLVCGQCVCDQSRGGDKCECPLASHGVSKASELEDKCRFNSSSPVCSASGKCKCGQCQCNKPTVTGKFCQCDNDSCPLAVNGKVCSGNGVCDCGVCKCEMGWERDDCSCSTASNNCVDNGTPAPEEKDKPESVPEEPEATEKPDDMPSDSDLEKELDESSSAKEEQTSSSGVVSRVCVLLTFFLLVLNF</sequence>
<proteinExistence type="evidence at protein level"/>
<comment type="subcellular location">
    <subcellularLocation>
        <location evidence="1">Membrane</location>
        <topology evidence="1">Single-pass type I membrane protein</topology>
    </subcellularLocation>
</comment>
<comment type="similarity">
    <text evidence="7">Belongs to the integrin beta chain family.</text>
</comment>
<organism>
    <name type="scientific">Caenorhabditis elegans</name>
    <dbReference type="NCBI Taxonomy" id="6239"/>
    <lineage>
        <taxon>Eukaryota</taxon>
        <taxon>Metazoa</taxon>
        <taxon>Ecdysozoa</taxon>
        <taxon>Nematoda</taxon>
        <taxon>Chromadorea</taxon>
        <taxon>Rhabditida</taxon>
        <taxon>Rhabditina</taxon>
        <taxon>Rhabditomorpha</taxon>
        <taxon>Rhabditoidea</taxon>
        <taxon>Rhabditidae</taxon>
        <taxon>Peloderinae</taxon>
        <taxon>Caenorhabditis</taxon>
    </lineage>
</organism>
<dbReference type="EMBL" id="FO080359">
    <property type="protein sequence ID" value="CCD63144.1"/>
    <property type="molecule type" value="Genomic_DNA"/>
</dbReference>
<dbReference type="RefSeq" id="NP_508212.3">
    <property type="nucleotide sequence ID" value="NM_075811.5"/>
</dbReference>
<dbReference type="SMR" id="Q9GYK2"/>
<dbReference type="BioGRID" id="47112">
    <property type="interactions" value="4"/>
</dbReference>
<dbReference type="FunCoup" id="Q9GYK2">
    <property type="interactions" value="77"/>
</dbReference>
<dbReference type="IntAct" id="Q9GYK2">
    <property type="interactions" value="1"/>
</dbReference>
<dbReference type="STRING" id="6239.C05D9.3.1"/>
<dbReference type="iPTMnet" id="Q9GYK2"/>
<dbReference type="PaxDb" id="6239-C05D9.3"/>
<dbReference type="PeptideAtlas" id="Q9GYK2"/>
<dbReference type="EnsemblMetazoa" id="C05D9.3a.1">
    <property type="protein sequence ID" value="C05D9.3a.1"/>
    <property type="gene ID" value="WBGene00015472"/>
</dbReference>
<dbReference type="GeneID" id="182254"/>
<dbReference type="KEGG" id="cel:CELE_C05D9.3"/>
<dbReference type="UCSC" id="C05D9.3">
    <property type="organism name" value="c. elegans"/>
</dbReference>
<dbReference type="AGR" id="WB:WBGene00015472"/>
<dbReference type="CTD" id="182254"/>
<dbReference type="WormBase" id="C05D9.3a">
    <property type="protein sequence ID" value="CE35381"/>
    <property type="gene ID" value="WBGene00015472"/>
</dbReference>
<dbReference type="eggNOG" id="KOG1226">
    <property type="taxonomic scope" value="Eukaryota"/>
</dbReference>
<dbReference type="GeneTree" id="ENSGT01110000267169"/>
<dbReference type="HOGENOM" id="CLU_617105_0_0_1"/>
<dbReference type="InParanoid" id="Q9GYK2"/>
<dbReference type="OMA" id="ICGCECE"/>
<dbReference type="OrthoDB" id="410592at2759"/>
<dbReference type="PhylomeDB" id="Q9GYK2"/>
<dbReference type="Reactome" id="R-CEL-114608">
    <property type="pathway name" value="Platelet degranulation"/>
</dbReference>
<dbReference type="Reactome" id="R-CEL-1236973">
    <property type="pathway name" value="Cross-presentation of particulate exogenous antigens (phagosomes)"/>
</dbReference>
<dbReference type="Reactome" id="R-CEL-1566977">
    <property type="pathway name" value="Fibronectin matrix formation"/>
</dbReference>
<dbReference type="Reactome" id="R-CEL-198933">
    <property type="pathway name" value="Immunoregulatory interactions between a Lymphoid and a non-Lymphoid cell"/>
</dbReference>
<dbReference type="Reactome" id="R-CEL-202733">
    <property type="pathway name" value="Cell surface interactions at the vascular wall"/>
</dbReference>
<dbReference type="Reactome" id="R-CEL-210991">
    <property type="pathway name" value="Basigin interactions"/>
</dbReference>
<dbReference type="Reactome" id="R-CEL-2129379">
    <property type="pathway name" value="Molecules associated with elastic fibres"/>
</dbReference>
<dbReference type="Reactome" id="R-CEL-216083">
    <property type="pathway name" value="Integrin cell surface interactions"/>
</dbReference>
<dbReference type="Reactome" id="R-CEL-2173789">
    <property type="pathway name" value="TGF-beta receptor signaling activates SMADs"/>
</dbReference>
<dbReference type="Reactome" id="R-CEL-3000157">
    <property type="pathway name" value="Laminin interactions"/>
</dbReference>
<dbReference type="Reactome" id="R-CEL-3000170">
    <property type="pathway name" value="Syndecan interactions"/>
</dbReference>
<dbReference type="Reactome" id="R-CEL-3000178">
    <property type="pathway name" value="ECM proteoglycans"/>
</dbReference>
<dbReference type="Reactome" id="R-CEL-354192">
    <property type="pathway name" value="Integrin signaling"/>
</dbReference>
<dbReference type="Reactome" id="R-CEL-354194">
    <property type="pathway name" value="GRB2:SOS provides linkage to MAPK signaling for Integrins"/>
</dbReference>
<dbReference type="Reactome" id="R-CEL-4420097">
    <property type="pathway name" value="VEGFA-VEGFR2 Pathway"/>
</dbReference>
<dbReference type="Reactome" id="R-CEL-445144">
    <property type="pathway name" value="Signal transduction by L1"/>
</dbReference>
<dbReference type="Reactome" id="R-CEL-445355">
    <property type="pathway name" value="Smooth Muscle Contraction"/>
</dbReference>
<dbReference type="Reactome" id="R-CEL-446343">
    <property type="pathway name" value="Localization of the PINCH-ILK-PARVIN complex to focal adhesions"/>
</dbReference>
<dbReference type="Reactome" id="R-CEL-5674135">
    <property type="pathway name" value="MAP2K and MAPK activation"/>
</dbReference>
<dbReference type="Reactome" id="R-CEL-6798695">
    <property type="pathway name" value="Neutrophil degranulation"/>
</dbReference>
<dbReference type="Reactome" id="R-CEL-8874081">
    <property type="pathway name" value="MET activates PTK2 signaling"/>
</dbReference>
<dbReference type="Reactome" id="R-CEL-8875513">
    <property type="pathway name" value="MET interacts with TNS proteins"/>
</dbReference>
<dbReference type="Reactome" id="R-CEL-9013149">
    <property type="pathway name" value="RAC1 GTPase cycle"/>
</dbReference>
<dbReference type="Reactome" id="R-CEL-9013404">
    <property type="pathway name" value="RAC2 GTPase cycle"/>
</dbReference>
<dbReference type="Reactome" id="R-CEL-9013408">
    <property type="pathway name" value="RHOG GTPase cycle"/>
</dbReference>
<dbReference type="Reactome" id="R-CEL-9013423">
    <property type="pathway name" value="RAC3 GTPase cycle"/>
</dbReference>
<dbReference type="Reactome" id="R-CEL-9860927">
    <property type="pathway name" value="Turbulent (oscillatory, disturbed) flow shear stress activates signaling by PIEZO1 and integrins in endothelial cells"/>
</dbReference>
<dbReference type="PRO" id="PR:Q9GYK2"/>
<dbReference type="Proteomes" id="UP000001940">
    <property type="component" value="Chromosome X"/>
</dbReference>
<dbReference type="Bgee" id="WBGene00015472">
    <property type="expression patterns" value="Expressed in larva and 3 other cell types or tissues"/>
</dbReference>
<dbReference type="ExpressionAtlas" id="Q9GYK2">
    <property type="expression patterns" value="baseline and differential"/>
</dbReference>
<dbReference type="GO" id="GO:0005886">
    <property type="term" value="C:plasma membrane"/>
    <property type="evidence" value="ECO:0007005"/>
    <property type="project" value="WormBase"/>
</dbReference>
<dbReference type="GO" id="GO:0007229">
    <property type="term" value="P:integrin-mediated signaling pathway"/>
    <property type="evidence" value="ECO:0007669"/>
    <property type="project" value="UniProtKB-KW"/>
</dbReference>
<dbReference type="FunFam" id="2.10.25.10:FF:000036">
    <property type="entry name" value="Integrin beta"/>
    <property type="match status" value="1"/>
</dbReference>
<dbReference type="Gene3D" id="2.10.25.10">
    <property type="entry name" value="Laminin"/>
    <property type="match status" value="2"/>
</dbReference>
<dbReference type="Gene3D" id="3.30.1680.10">
    <property type="entry name" value="ligand-binding face of the semaphorins, domain 2"/>
    <property type="match status" value="1"/>
</dbReference>
<dbReference type="Gene3D" id="2.60.40.1510">
    <property type="entry name" value="ntegrin, alpha v. Chain A, domain 3"/>
    <property type="match status" value="1"/>
</dbReference>
<dbReference type="InterPro" id="IPR040622">
    <property type="entry name" value="I-EGF_1"/>
</dbReference>
<dbReference type="InterPro" id="IPR015812">
    <property type="entry name" value="Integrin_bsu"/>
</dbReference>
<dbReference type="InterPro" id="IPR032695">
    <property type="entry name" value="Integrin_dom_sf"/>
</dbReference>
<dbReference type="PANTHER" id="PTHR10082">
    <property type="entry name" value="INTEGRIN BETA SUBUNIT"/>
    <property type="match status" value="1"/>
</dbReference>
<dbReference type="PANTHER" id="PTHR10082:SF60">
    <property type="entry name" value="INTEGRIN BETA-PS"/>
    <property type="match status" value="1"/>
</dbReference>
<dbReference type="Pfam" id="PF23105">
    <property type="entry name" value="EGF_integrin"/>
    <property type="match status" value="1"/>
</dbReference>
<dbReference type="Pfam" id="PF18372">
    <property type="entry name" value="I-EGF_1"/>
    <property type="match status" value="1"/>
</dbReference>
<dbReference type="PRINTS" id="PR01186">
    <property type="entry name" value="INTEGRINB"/>
</dbReference>
<dbReference type="SUPFAM" id="SSF69179">
    <property type="entry name" value="Integrin domains"/>
    <property type="match status" value="1"/>
</dbReference>
<dbReference type="SUPFAM" id="SSF103575">
    <property type="entry name" value="Plexin repeat"/>
    <property type="match status" value="1"/>
</dbReference>
<dbReference type="PROSITE" id="PS00022">
    <property type="entry name" value="EGF_1"/>
    <property type="match status" value="1"/>
</dbReference>
<dbReference type="PROSITE" id="PS01186">
    <property type="entry name" value="EGF_2"/>
    <property type="match status" value="1"/>
</dbReference>
<dbReference type="PROSITE" id="PS00243">
    <property type="entry name" value="I_EGF_1"/>
    <property type="match status" value="1"/>
</dbReference>
<dbReference type="PROSITE" id="PS52047">
    <property type="entry name" value="I_EGF_2"/>
    <property type="match status" value="3"/>
</dbReference>
<reference key="1">
    <citation type="journal article" date="1998" name="Science">
        <title>Genome sequence of the nematode C. elegans: a platform for investigating biology.</title>
        <authorList>
            <consortium name="The C. elegans sequencing consortium"/>
        </authorList>
    </citation>
    <scope>NUCLEOTIDE SEQUENCE [LARGE SCALE GENOMIC DNA]</scope>
    <source>
        <strain>Bristol N2</strain>
    </source>
</reference>
<reference key="2">
    <citation type="journal article" date="2003" name="Nat. Biotechnol.">
        <title>Lectin affinity capture, isotope-coded tagging and mass spectrometry to identify N-linked glycoproteins.</title>
        <authorList>
            <person name="Kaji H."/>
            <person name="Saito H."/>
            <person name="Yamauchi Y."/>
            <person name="Shinkawa T."/>
            <person name="Taoka M."/>
            <person name="Hirabayashi J."/>
            <person name="Kasai K."/>
            <person name="Takahashi N."/>
            <person name="Isobe T."/>
        </authorList>
    </citation>
    <scope>GLYCOSYLATION [LARGE SCALE ANALYSIS] AT ASN-65</scope>
    <scope>IDENTIFICATION BY MASS SPECTROMETRY</scope>
    <source>
        <strain>Bristol N2</strain>
    </source>
</reference>
<reference key="3">
    <citation type="journal article" date="2007" name="Mol. Cell. Proteomics">
        <title>Proteomics reveals N-linked glycoprotein diversity in Caenorhabditis elegans and suggests an atypical translocation mechanism for integral membrane proteins.</title>
        <authorList>
            <person name="Kaji H."/>
            <person name="Kamiie J."/>
            <person name="Kawakami H."/>
            <person name="Kido K."/>
            <person name="Yamauchi Y."/>
            <person name="Shinkawa T."/>
            <person name="Taoka M."/>
            <person name="Takahashi N."/>
            <person name="Isobe T."/>
        </authorList>
    </citation>
    <scope>GLYCOSYLATION [LARGE SCALE ANALYSIS] AT ASN-65 AND ASN-274</scope>
    <scope>IDENTIFICATION BY MASS SPECTROMETRY</scope>
    <source>
        <strain>Bristol N2</strain>
    </source>
</reference>
<feature type="signal peptide" evidence="2">
    <location>
        <begin position="1"/>
        <end position="16"/>
    </location>
</feature>
<feature type="chain" id="PRO_0000250560" description="Uncharacterized integrin beta-like protein C05D9.3">
    <location>
        <begin position="17"/>
        <end position="423"/>
    </location>
</feature>
<feature type="topological domain" description="Extracellular" evidence="2">
    <location>
        <begin position="17"/>
        <end position="402"/>
    </location>
</feature>
<feature type="transmembrane region" description="Helical" evidence="2">
    <location>
        <begin position="403"/>
        <end position="421"/>
    </location>
</feature>
<feature type="topological domain" description="Cytoplasmic" evidence="2">
    <location>
        <begin position="422"/>
        <end position="423"/>
    </location>
</feature>
<feature type="domain" description="I-EGF 1" evidence="3">
    <location>
        <begin position="219"/>
        <end position="253"/>
    </location>
</feature>
<feature type="domain" description="I-EGF 2" evidence="3">
    <location>
        <begin position="254"/>
        <end position="304"/>
    </location>
</feature>
<feature type="domain" description="I-EGF 3" evidence="3">
    <location>
        <begin position="305"/>
        <end position="342"/>
    </location>
</feature>
<feature type="region of interest" description="Cysteine-rich tandem repeats">
    <location>
        <begin position="215"/>
        <end position="350"/>
    </location>
</feature>
<feature type="region of interest" description="Disordered" evidence="4">
    <location>
        <begin position="354"/>
        <end position="406"/>
    </location>
</feature>
<feature type="compositionally biased region" description="Acidic residues" evidence="4">
    <location>
        <begin position="380"/>
        <end position="392"/>
    </location>
</feature>
<feature type="glycosylation site" description="N-linked (GlcNAc...) asparagine" evidence="5 6">
    <location>
        <position position="65"/>
    </location>
</feature>
<feature type="glycosylation site" description="N-linked (GlcNAc...) asparagine" evidence="6">
    <location>
        <position position="274"/>
    </location>
</feature>
<feature type="glycosylation site" description="N-linked (GlcNAc...) asparagine" evidence="2">
    <location>
        <position position="307"/>
    </location>
</feature>
<feature type="disulfide bond" evidence="1">
    <location>
        <begin position="24"/>
        <end position="217"/>
    </location>
</feature>
<feature type="disulfide bond" evidence="1">
    <location>
        <begin position="33"/>
        <end position="43"/>
    </location>
</feature>
<feature type="disulfide bond" evidence="1">
    <location>
        <begin position="36"/>
        <end position="68"/>
    </location>
</feature>
<feature type="disulfide bond" evidence="1">
    <location>
        <begin position="46"/>
        <end position="57"/>
    </location>
</feature>
<feature type="disulfide bond" evidence="3">
    <location>
        <begin position="219"/>
        <end position="238"/>
    </location>
</feature>
<feature type="disulfide bond" evidence="3">
    <location>
        <begin position="230"/>
        <end position="241"/>
    </location>
</feature>
<feature type="disulfide bond" evidence="3">
    <location>
        <begin position="243"/>
        <end position="252"/>
    </location>
</feature>
<feature type="disulfide bond" evidence="3">
    <location>
        <begin position="254"/>
        <end position="288"/>
    </location>
</feature>
<feature type="disulfide bond" evidence="3">
    <location>
        <begin position="271"/>
        <end position="286"/>
    </location>
</feature>
<feature type="disulfide bond" evidence="3">
    <location>
        <begin position="280"/>
        <end position="291"/>
    </location>
</feature>
<feature type="disulfide bond" evidence="3">
    <location>
        <begin position="293"/>
        <end position="303"/>
    </location>
</feature>
<feature type="disulfide bond" evidence="3">
    <location>
        <begin position="305"/>
        <end position="327"/>
    </location>
</feature>
<feature type="disulfide bond" evidence="3">
    <location>
        <begin position="310"/>
        <end position="325"/>
    </location>
</feature>
<feature type="disulfide bond" evidence="3">
    <location>
        <begin position="319"/>
        <end position="330"/>
    </location>
</feature>
<feature type="disulfide bond" evidence="3">
    <location>
        <begin position="332"/>
        <end position="341"/>
    </location>
</feature>
<feature type="disulfide bond" evidence="1">
    <location>
        <begin position="343"/>
        <end position="350"/>
    </location>
</feature>
<protein>
    <recommendedName>
        <fullName>Uncharacterized integrin beta-like protein C05D9.3</fullName>
    </recommendedName>
</protein>